<evidence type="ECO:0000250" key="1"/>
<evidence type="ECO:0000255" key="2">
    <source>
        <dbReference type="PROSITE-ProRule" id="PRU00609"/>
    </source>
</evidence>
<organism>
    <name type="scientific">Escherichia coli (strain K12)</name>
    <dbReference type="NCBI Taxonomy" id="83333"/>
    <lineage>
        <taxon>Bacteria</taxon>
        <taxon>Pseudomonadati</taxon>
        <taxon>Pseudomonadota</taxon>
        <taxon>Gammaproteobacteria</taxon>
        <taxon>Enterobacterales</taxon>
        <taxon>Enterobacteriaceae</taxon>
        <taxon>Escherichia</taxon>
    </lineage>
</organism>
<reference key="1">
    <citation type="journal article" date="1995" name="Mutat. Res.">
        <title>dinP, a new gene in Escherichia coli, whose product shows similarities to UmuC and its homologues.</title>
        <authorList>
            <person name="Ohmori H."/>
            <person name="Hatada E."/>
            <person name="Qiao Y."/>
            <person name="Tsuji M."/>
            <person name="Fukuda R."/>
        </authorList>
    </citation>
    <scope>NUCLEOTIDE SEQUENCE [GENOMIC DNA]</scope>
    <source>
        <strain>K12 / W3110 / ATCC 27325 / DSM 5911</strain>
    </source>
</reference>
<reference key="2">
    <citation type="submission" date="1996-02" db="EMBL/GenBank/DDBJ databases">
        <title>Systematic sequencing of the Escherichia coli genome: analysis of the 4.0 - 6.0 min (189,987 - 281,416bp) region.</title>
        <authorList>
            <person name="Takemoto K."/>
            <person name="Mori H."/>
            <person name="Murayama N."/>
            <person name="Kataoka K."/>
            <person name="Yano M."/>
            <person name="Itoh T."/>
            <person name="Yamamoto Y."/>
            <person name="Inokuchi H."/>
            <person name="Miki T."/>
            <person name="Hatada E."/>
            <person name="Fukuda R."/>
            <person name="Ichihara S."/>
            <person name="Mizuno T."/>
            <person name="Makino K."/>
            <person name="Nakata A."/>
            <person name="Yura T."/>
            <person name="Sampei G."/>
            <person name="Mizobuchi K."/>
        </authorList>
    </citation>
    <scope>NUCLEOTIDE SEQUENCE [LARGE SCALE GENOMIC DNA]</scope>
    <source>
        <strain>K12 / W3110 / ATCC 27325 / DSM 5911</strain>
    </source>
</reference>
<reference key="3">
    <citation type="submission" date="1997-01" db="EMBL/GenBank/DDBJ databases">
        <title>Sequence of minutes 4-25 of Escherichia coli.</title>
        <authorList>
            <person name="Chung E."/>
            <person name="Allen E."/>
            <person name="Araujo R."/>
            <person name="Aparicio A.M."/>
            <person name="Davis K."/>
            <person name="Duncan M."/>
            <person name="Federspiel N."/>
            <person name="Hyman R."/>
            <person name="Kalman S."/>
            <person name="Komp C."/>
            <person name="Kurdi O."/>
            <person name="Lew H."/>
            <person name="Lin D."/>
            <person name="Namath A."/>
            <person name="Oefner P."/>
            <person name="Roberts D."/>
            <person name="Schramm S."/>
            <person name="Davis R.W."/>
        </authorList>
    </citation>
    <scope>NUCLEOTIDE SEQUENCE [LARGE SCALE GENOMIC DNA]</scope>
    <source>
        <strain>K12 / MG1655 / ATCC 47076</strain>
    </source>
</reference>
<reference key="4">
    <citation type="journal article" date="1997" name="Science">
        <title>The complete genome sequence of Escherichia coli K-12.</title>
        <authorList>
            <person name="Blattner F.R."/>
            <person name="Plunkett G. III"/>
            <person name="Bloch C.A."/>
            <person name="Perna N.T."/>
            <person name="Burland V."/>
            <person name="Riley M."/>
            <person name="Collado-Vides J."/>
            <person name="Glasner J.D."/>
            <person name="Rode C.K."/>
            <person name="Mayhew G.F."/>
            <person name="Gregor J."/>
            <person name="Davis N.W."/>
            <person name="Kirkpatrick H.A."/>
            <person name="Goeden M.A."/>
            <person name="Rose D.J."/>
            <person name="Mau B."/>
            <person name="Shao Y."/>
        </authorList>
    </citation>
    <scope>NUCLEOTIDE SEQUENCE [LARGE SCALE GENOMIC DNA]</scope>
    <source>
        <strain>K12 / MG1655 / ATCC 47076</strain>
    </source>
</reference>
<reference key="5">
    <citation type="journal article" date="2006" name="Mol. Syst. Biol.">
        <title>Highly accurate genome sequences of Escherichia coli K-12 strains MG1655 and W3110.</title>
        <authorList>
            <person name="Hayashi K."/>
            <person name="Morooka N."/>
            <person name="Yamamoto Y."/>
            <person name="Fujita K."/>
            <person name="Isono K."/>
            <person name="Choi S."/>
            <person name="Ohtsubo E."/>
            <person name="Baba T."/>
            <person name="Wanner B.L."/>
            <person name="Mori H."/>
            <person name="Horiuchi T."/>
        </authorList>
    </citation>
    <scope>NUCLEOTIDE SEQUENCE [LARGE SCALE GENOMIC DNA]</scope>
    <source>
        <strain>K12 / W3110 / ATCC 27325 / DSM 5911</strain>
    </source>
</reference>
<sequence>MCELLGMSANVPTDICFSFTGLVQRGGGTGPHKDGWGITFYEGKGCRTFKDPQPSFNSPIAKLVQDYPIKSCSVVAHIRQANRGEVALENTHPFTRELWGRNWTYAHNGQLTGYKSLETGNFRPVGETDSEKAFCWLLHKLTQRYPRTPGNMAAVFKYIASLADELRQKGVFNMLLSDGRYVMAYCSTNLHWITRRAPFGVATLLDQDVEIDFSSQTTPNDVVTVIATQPLTGNETWQKIMPGEWRLFCLGERVV</sequence>
<proteinExistence type="evidence at protein level"/>
<accession>Q47147</accession>
<comment type="interaction">
    <interactant intactId="EBI-1114805">
        <id>Q47147</id>
    </interactant>
    <interactant intactId="EBI-557917">
        <id>P12996</id>
        <label>bioB</label>
    </interactant>
    <organismsDiffer>false</organismsDiffer>
    <experiments>4</experiments>
</comment>
<gene>
    <name type="primary">yafJ</name>
    <name type="ordered locus">b0223</name>
    <name type="ordered locus">JW0213</name>
</gene>
<protein>
    <recommendedName>
        <fullName>Putative glutamine amidotransferase YafJ</fullName>
        <ecNumber>2.4.2.-</ecNumber>
    </recommendedName>
</protein>
<keyword id="KW-0315">Glutamine amidotransferase</keyword>
<keyword id="KW-1185">Reference proteome</keyword>
<keyword id="KW-0808">Transferase</keyword>
<feature type="initiator methionine" description="Removed" evidence="1">
    <location>
        <position position="1"/>
    </location>
</feature>
<feature type="chain" id="PRO_0000168534" description="Putative glutamine amidotransferase YafJ">
    <location>
        <begin position="2"/>
        <end position="255"/>
    </location>
</feature>
<feature type="domain" description="Glutamine amidotransferase type-2" evidence="2">
    <location>
        <begin position="2"/>
        <end position="251"/>
    </location>
</feature>
<feature type="active site" description="For GATase activity" evidence="1">
    <location>
        <position position="2"/>
    </location>
</feature>
<name>YAFJ_ECOLI</name>
<dbReference type="EC" id="2.4.2.-"/>
<dbReference type="EMBL" id="D38582">
    <property type="protein sequence ID" value="BAA07585.1"/>
    <property type="molecule type" value="Genomic_DNA"/>
</dbReference>
<dbReference type="EMBL" id="U70214">
    <property type="protein sequence ID" value="AAB08645.1"/>
    <property type="molecule type" value="Genomic_DNA"/>
</dbReference>
<dbReference type="EMBL" id="U00096">
    <property type="protein sequence ID" value="AAC73327.1"/>
    <property type="molecule type" value="Genomic_DNA"/>
</dbReference>
<dbReference type="EMBL" id="AP009048">
    <property type="protein sequence ID" value="BAA77893.1"/>
    <property type="molecule type" value="Genomic_DNA"/>
</dbReference>
<dbReference type="PIR" id="H64746">
    <property type="entry name" value="H64746"/>
</dbReference>
<dbReference type="RefSeq" id="NP_414758.1">
    <property type="nucleotide sequence ID" value="NC_000913.3"/>
</dbReference>
<dbReference type="RefSeq" id="WP_000333380.1">
    <property type="nucleotide sequence ID" value="NZ_STEB01000020.1"/>
</dbReference>
<dbReference type="SMR" id="Q47147"/>
<dbReference type="BioGRID" id="4260847">
    <property type="interactions" value="16"/>
</dbReference>
<dbReference type="BioGRID" id="849305">
    <property type="interactions" value="10"/>
</dbReference>
<dbReference type="FunCoup" id="Q47147">
    <property type="interactions" value="37"/>
</dbReference>
<dbReference type="IntAct" id="Q47147">
    <property type="interactions" value="14"/>
</dbReference>
<dbReference type="STRING" id="511145.b0223"/>
<dbReference type="jPOST" id="Q47147"/>
<dbReference type="PaxDb" id="511145-b0223"/>
<dbReference type="EnsemblBacteria" id="AAC73327">
    <property type="protein sequence ID" value="AAC73327"/>
    <property type="gene ID" value="b0223"/>
</dbReference>
<dbReference type="GeneID" id="944906"/>
<dbReference type="KEGG" id="ecj:JW0213"/>
<dbReference type="KEGG" id="eco:b0223"/>
<dbReference type="KEGG" id="ecoc:C3026_01055"/>
<dbReference type="KEGG" id="ecoc:C3026_23795"/>
<dbReference type="PATRIC" id="fig|1411691.4.peg.2060"/>
<dbReference type="EchoBASE" id="EB2941"/>
<dbReference type="eggNOG" id="COG0121">
    <property type="taxonomic scope" value="Bacteria"/>
</dbReference>
<dbReference type="HOGENOM" id="CLU_059273_0_0_6"/>
<dbReference type="InParanoid" id="Q47147"/>
<dbReference type="OMA" id="YWVFAHN"/>
<dbReference type="OrthoDB" id="321954at2"/>
<dbReference type="PhylomeDB" id="Q47147"/>
<dbReference type="BioCyc" id="EcoCyc:G6107-MONOMER"/>
<dbReference type="PRO" id="PR:Q47147"/>
<dbReference type="Proteomes" id="UP000000625">
    <property type="component" value="Chromosome"/>
</dbReference>
<dbReference type="GO" id="GO:0016740">
    <property type="term" value="F:transferase activity"/>
    <property type="evidence" value="ECO:0007669"/>
    <property type="project" value="UniProtKB-KW"/>
</dbReference>
<dbReference type="CDD" id="cd01908">
    <property type="entry name" value="YafJ"/>
    <property type="match status" value="1"/>
</dbReference>
<dbReference type="Gene3D" id="3.60.20.10">
    <property type="entry name" value="Glutamine Phosphoribosylpyrophosphate, subunit 1, domain 1"/>
    <property type="match status" value="1"/>
</dbReference>
<dbReference type="InterPro" id="IPR026869">
    <property type="entry name" value="EgtC-like"/>
</dbReference>
<dbReference type="InterPro" id="IPR017932">
    <property type="entry name" value="GATase_2_dom"/>
</dbReference>
<dbReference type="InterPro" id="IPR029055">
    <property type="entry name" value="Ntn_hydrolases_N"/>
</dbReference>
<dbReference type="PANTHER" id="PTHR42824">
    <property type="entry name" value="GLUTAMINE AMIDOTRANSFERASE"/>
    <property type="match status" value="1"/>
</dbReference>
<dbReference type="PANTHER" id="PTHR42824:SF1">
    <property type="entry name" value="GLUTAMINE AMIDOTRANSFERASE YAFJ-RELATED"/>
    <property type="match status" value="1"/>
</dbReference>
<dbReference type="Pfam" id="PF13230">
    <property type="entry name" value="GATase_4"/>
    <property type="match status" value="1"/>
</dbReference>
<dbReference type="SUPFAM" id="SSF56235">
    <property type="entry name" value="N-terminal nucleophile aminohydrolases (Ntn hydrolases)"/>
    <property type="match status" value="1"/>
</dbReference>
<dbReference type="PROSITE" id="PS51278">
    <property type="entry name" value="GATASE_TYPE_2"/>
    <property type="match status" value="1"/>
</dbReference>